<accession>B6EPK1</accession>
<name>HEM3_ALISL</name>
<evidence type="ECO:0000255" key="1">
    <source>
        <dbReference type="HAMAP-Rule" id="MF_00260"/>
    </source>
</evidence>
<comment type="function">
    <text evidence="1">Tetrapolymerization of the monopyrrole PBG into the hydroxymethylbilane pre-uroporphyrinogen in several discrete steps.</text>
</comment>
<comment type="catalytic activity">
    <reaction evidence="1">
        <text>4 porphobilinogen + H2O = hydroxymethylbilane + 4 NH4(+)</text>
        <dbReference type="Rhea" id="RHEA:13185"/>
        <dbReference type="ChEBI" id="CHEBI:15377"/>
        <dbReference type="ChEBI" id="CHEBI:28938"/>
        <dbReference type="ChEBI" id="CHEBI:57845"/>
        <dbReference type="ChEBI" id="CHEBI:58126"/>
        <dbReference type="EC" id="2.5.1.61"/>
    </reaction>
</comment>
<comment type="cofactor">
    <cofactor evidence="1">
        <name>dipyrromethane</name>
        <dbReference type="ChEBI" id="CHEBI:60342"/>
    </cofactor>
    <text evidence="1">Binds 1 dipyrromethane group covalently.</text>
</comment>
<comment type="pathway">
    <text evidence="1">Porphyrin-containing compound metabolism; protoporphyrin-IX biosynthesis; coproporphyrinogen-III from 5-aminolevulinate: step 2/4.</text>
</comment>
<comment type="subunit">
    <text evidence="1">Monomer.</text>
</comment>
<comment type="miscellaneous">
    <text evidence="1">The porphobilinogen subunits are added to the dipyrromethane group.</text>
</comment>
<comment type="similarity">
    <text evidence="1">Belongs to the HMBS family.</text>
</comment>
<reference key="1">
    <citation type="journal article" date="2008" name="BMC Genomics">
        <title>The genome sequence of the fish pathogen Aliivibrio salmonicida strain LFI1238 shows extensive evidence of gene decay.</title>
        <authorList>
            <person name="Hjerde E."/>
            <person name="Lorentzen M.S."/>
            <person name="Holden M.T."/>
            <person name="Seeger K."/>
            <person name="Paulsen S."/>
            <person name="Bason N."/>
            <person name="Churcher C."/>
            <person name="Harris D."/>
            <person name="Norbertczak H."/>
            <person name="Quail M.A."/>
            <person name="Sanders S."/>
            <person name="Thurston S."/>
            <person name="Parkhill J."/>
            <person name="Willassen N.P."/>
            <person name="Thomson N.R."/>
        </authorList>
    </citation>
    <scope>NUCLEOTIDE SEQUENCE [LARGE SCALE GENOMIC DNA]</scope>
    <source>
        <strain>LFI1238</strain>
    </source>
</reference>
<feature type="chain" id="PRO_1000114132" description="Porphobilinogen deaminase">
    <location>
        <begin position="1"/>
        <end position="311"/>
    </location>
</feature>
<feature type="modified residue" description="S-(dipyrrolylmethanemethyl)cysteine" evidence="1">
    <location>
        <position position="243"/>
    </location>
</feature>
<sequence>MSQQLPVRIATRKSPLALWQAHFVKDALQAAHPGLEVELVTMVTKGDIILDTPLAKIGGKGLFVKELEVAMLEGRADLAVHSMKDVPVEFPEGLGLVTICERGDPRDAFVSNTYNNIDELPQGATVGTCSLRRQCQLKEYRPDLIIKELRGNVGTRLQKLDDGNYDAIILACAGLIRLGLEDRIKSSIEPEQSLPAVGQGAVGIETRLNDDRIRALLAPLNHPETAHRVLCERAMNNRLEGGCQVPIGSYSLIDGDQIWLRALVGEPDGSIMVRGETTGPVSDAEELGTKLAEQLLNDGAKDILDRLYADA</sequence>
<gene>
    <name evidence="1" type="primary">hemC</name>
    <name type="ordered locus">VSAL_I0220</name>
</gene>
<dbReference type="EC" id="2.5.1.61" evidence="1"/>
<dbReference type="EMBL" id="FM178379">
    <property type="protein sequence ID" value="CAQ77905.1"/>
    <property type="molecule type" value="Genomic_DNA"/>
</dbReference>
<dbReference type="RefSeq" id="WP_012549092.1">
    <property type="nucleotide sequence ID" value="NC_011312.1"/>
</dbReference>
<dbReference type="SMR" id="B6EPK1"/>
<dbReference type="KEGG" id="vsa:VSAL_I0220"/>
<dbReference type="eggNOG" id="COG0181">
    <property type="taxonomic scope" value="Bacteria"/>
</dbReference>
<dbReference type="HOGENOM" id="CLU_019704_0_2_6"/>
<dbReference type="UniPathway" id="UPA00251">
    <property type="reaction ID" value="UER00319"/>
</dbReference>
<dbReference type="Proteomes" id="UP000001730">
    <property type="component" value="Chromosome 1"/>
</dbReference>
<dbReference type="GO" id="GO:0005737">
    <property type="term" value="C:cytoplasm"/>
    <property type="evidence" value="ECO:0007669"/>
    <property type="project" value="TreeGrafter"/>
</dbReference>
<dbReference type="GO" id="GO:0004418">
    <property type="term" value="F:hydroxymethylbilane synthase activity"/>
    <property type="evidence" value="ECO:0007669"/>
    <property type="project" value="UniProtKB-UniRule"/>
</dbReference>
<dbReference type="GO" id="GO:0006782">
    <property type="term" value="P:protoporphyrinogen IX biosynthetic process"/>
    <property type="evidence" value="ECO:0007669"/>
    <property type="project" value="UniProtKB-UniRule"/>
</dbReference>
<dbReference type="CDD" id="cd13646">
    <property type="entry name" value="PBP2_EcHMBS_like"/>
    <property type="match status" value="1"/>
</dbReference>
<dbReference type="FunFam" id="3.30.160.40:FF:000002">
    <property type="entry name" value="Porphobilinogen deaminase"/>
    <property type="match status" value="1"/>
</dbReference>
<dbReference type="FunFam" id="3.40.190.10:FF:000004">
    <property type="entry name" value="Porphobilinogen deaminase"/>
    <property type="match status" value="1"/>
</dbReference>
<dbReference type="FunFam" id="3.40.190.10:FF:000005">
    <property type="entry name" value="Porphobilinogen deaminase"/>
    <property type="match status" value="1"/>
</dbReference>
<dbReference type="Gene3D" id="3.40.190.10">
    <property type="entry name" value="Periplasmic binding protein-like II"/>
    <property type="match status" value="2"/>
</dbReference>
<dbReference type="Gene3D" id="3.30.160.40">
    <property type="entry name" value="Porphobilinogen deaminase, C-terminal domain"/>
    <property type="match status" value="1"/>
</dbReference>
<dbReference type="HAMAP" id="MF_00260">
    <property type="entry name" value="Porphobil_deam"/>
    <property type="match status" value="1"/>
</dbReference>
<dbReference type="InterPro" id="IPR000860">
    <property type="entry name" value="HemC"/>
</dbReference>
<dbReference type="InterPro" id="IPR022419">
    <property type="entry name" value="Porphobilin_deaminase_cofac_BS"/>
</dbReference>
<dbReference type="InterPro" id="IPR022417">
    <property type="entry name" value="Porphobilin_deaminase_N"/>
</dbReference>
<dbReference type="InterPro" id="IPR022418">
    <property type="entry name" value="Porphobilinogen_deaminase_C"/>
</dbReference>
<dbReference type="InterPro" id="IPR036803">
    <property type="entry name" value="Porphobilinogen_deaminase_C_sf"/>
</dbReference>
<dbReference type="NCBIfam" id="TIGR00212">
    <property type="entry name" value="hemC"/>
    <property type="match status" value="1"/>
</dbReference>
<dbReference type="PANTHER" id="PTHR11557">
    <property type="entry name" value="PORPHOBILINOGEN DEAMINASE"/>
    <property type="match status" value="1"/>
</dbReference>
<dbReference type="PANTHER" id="PTHR11557:SF0">
    <property type="entry name" value="PORPHOBILINOGEN DEAMINASE"/>
    <property type="match status" value="1"/>
</dbReference>
<dbReference type="Pfam" id="PF01379">
    <property type="entry name" value="Porphobil_deam"/>
    <property type="match status" value="1"/>
</dbReference>
<dbReference type="Pfam" id="PF03900">
    <property type="entry name" value="Porphobil_deamC"/>
    <property type="match status" value="1"/>
</dbReference>
<dbReference type="PIRSF" id="PIRSF001438">
    <property type="entry name" value="4pyrrol_synth_OHMeBilane_synth"/>
    <property type="match status" value="1"/>
</dbReference>
<dbReference type="PRINTS" id="PR00151">
    <property type="entry name" value="PORPHBDMNASE"/>
</dbReference>
<dbReference type="SUPFAM" id="SSF53850">
    <property type="entry name" value="Periplasmic binding protein-like II"/>
    <property type="match status" value="1"/>
</dbReference>
<dbReference type="SUPFAM" id="SSF54782">
    <property type="entry name" value="Porphobilinogen deaminase (hydroxymethylbilane synthase), C-terminal domain"/>
    <property type="match status" value="1"/>
</dbReference>
<dbReference type="PROSITE" id="PS00533">
    <property type="entry name" value="PORPHOBILINOGEN_DEAM"/>
    <property type="match status" value="1"/>
</dbReference>
<proteinExistence type="inferred from homology"/>
<protein>
    <recommendedName>
        <fullName evidence="1">Porphobilinogen deaminase</fullName>
        <shortName evidence="1">PBG</shortName>
        <ecNumber evidence="1">2.5.1.61</ecNumber>
    </recommendedName>
    <alternativeName>
        <fullName evidence="1">Hydroxymethylbilane synthase</fullName>
        <shortName evidence="1">HMBS</shortName>
    </alternativeName>
    <alternativeName>
        <fullName evidence="1">Pre-uroporphyrinogen synthase</fullName>
    </alternativeName>
</protein>
<organism>
    <name type="scientific">Aliivibrio salmonicida (strain LFI1238)</name>
    <name type="common">Vibrio salmonicida (strain LFI1238)</name>
    <dbReference type="NCBI Taxonomy" id="316275"/>
    <lineage>
        <taxon>Bacteria</taxon>
        <taxon>Pseudomonadati</taxon>
        <taxon>Pseudomonadota</taxon>
        <taxon>Gammaproteobacteria</taxon>
        <taxon>Vibrionales</taxon>
        <taxon>Vibrionaceae</taxon>
        <taxon>Aliivibrio</taxon>
    </lineage>
</organism>
<keyword id="KW-0627">Porphyrin biosynthesis</keyword>
<keyword id="KW-0808">Transferase</keyword>